<protein>
    <recommendedName>
        <fullName evidence="1">Large ribosomal subunit protein bL19</fullName>
    </recommendedName>
    <alternativeName>
        <fullName evidence="2">50S ribosomal protein L19</fullName>
    </alternativeName>
</protein>
<dbReference type="EMBL" id="CP000776">
    <property type="protein sequence ID" value="ABS52482.1"/>
    <property type="molecule type" value="Genomic_DNA"/>
</dbReference>
<dbReference type="RefSeq" id="WP_012108436.1">
    <property type="nucleotide sequence ID" value="NC_009714.1"/>
</dbReference>
<dbReference type="SMR" id="A7I0V8"/>
<dbReference type="STRING" id="360107.CHAB381_0561"/>
<dbReference type="KEGG" id="cha:CHAB381_0561"/>
<dbReference type="eggNOG" id="COG0335">
    <property type="taxonomic scope" value="Bacteria"/>
</dbReference>
<dbReference type="HOGENOM" id="CLU_103507_2_2_7"/>
<dbReference type="OrthoDB" id="9803541at2"/>
<dbReference type="Proteomes" id="UP000002407">
    <property type="component" value="Chromosome"/>
</dbReference>
<dbReference type="GO" id="GO:0022625">
    <property type="term" value="C:cytosolic large ribosomal subunit"/>
    <property type="evidence" value="ECO:0007669"/>
    <property type="project" value="TreeGrafter"/>
</dbReference>
<dbReference type="GO" id="GO:0003735">
    <property type="term" value="F:structural constituent of ribosome"/>
    <property type="evidence" value="ECO:0007669"/>
    <property type="project" value="InterPro"/>
</dbReference>
<dbReference type="GO" id="GO:0006412">
    <property type="term" value="P:translation"/>
    <property type="evidence" value="ECO:0007669"/>
    <property type="project" value="UniProtKB-UniRule"/>
</dbReference>
<dbReference type="FunFam" id="2.30.30.790:FF:000001">
    <property type="entry name" value="50S ribosomal protein L19"/>
    <property type="match status" value="1"/>
</dbReference>
<dbReference type="Gene3D" id="2.30.30.790">
    <property type="match status" value="1"/>
</dbReference>
<dbReference type="HAMAP" id="MF_00402">
    <property type="entry name" value="Ribosomal_bL19"/>
    <property type="match status" value="1"/>
</dbReference>
<dbReference type="InterPro" id="IPR001857">
    <property type="entry name" value="Ribosomal_bL19"/>
</dbReference>
<dbReference type="InterPro" id="IPR038657">
    <property type="entry name" value="Ribosomal_bL19_sf"/>
</dbReference>
<dbReference type="InterPro" id="IPR008991">
    <property type="entry name" value="Translation_prot_SH3-like_sf"/>
</dbReference>
<dbReference type="NCBIfam" id="TIGR01024">
    <property type="entry name" value="rplS_bact"/>
    <property type="match status" value="1"/>
</dbReference>
<dbReference type="PANTHER" id="PTHR15680:SF9">
    <property type="entry name" value="LARGE RIBOSOMAL SUBUNIT PROTEIN BL19M"/>
    <property type="match status" value="1"/>
</dbReference>
<dbReference type="PANTHER" id="PTHR15680">
    <property type="entry name" value="RIBOSOMAL PROTEIN L19"/>
    <property type="match status" value="1"/>
</dbReference>
<dbReference type="Pfam" id="PF01245">
    <property type="entry name" value="Ribosomal_L19"/>
    <property type="match status" value="1"/>
</dbReference>
<dbReference type="PIRSF" id="PIRSF002191">
    <property type="entry name" value="Ribosomal_L19"/>
    <property type="match status" value="1"/>
</dbReference>
<dbReference type="PRINTS" id="PR00061">
    <property type="entry name" value="RIBOSOMALL19"/>
</dbReference>
<dbReference type="SUPFAM" id="SSF50104">
    <property type="entry name" value="Translation proteins SH3-like domain"/>
    <property type="match status" value="1"/>
</dbReference>
<keyword id="KW-1185">Reference proteome</keyword>
<keyword id="KW-0687">Ribonucleoprotein</keyword>
<keyword id="KW-0689">Ribosomal protein</keyword>
<reference key="1">
    <citation type="submission" date="2007-07" db="EMBL/GenBank/DDBJ databases">
        <title>Complete genome sequence of Campylobacter hominis ATCC BAA-381, a commensal isolated from the human gastrointestinal tract.</title>
        <authorList>
            <person name="Fouts D.E."/>
            <person name="Mongodin E.F."/>
            <person name="Puiu D."/>
            <person name="Sebastian Y."/>
            <person name="Miller W.G."/>
            <person name="Mandrell R.E."/>
            <person name="Nelson K.E."/>
        </authorList>
    </citation>
    <scope>NUCLEOTIDE SEQUENCE [LARGE SCALE GENOMIC DNA]</scope>
    <source>
        <strain>ATCC BAA-381 / DSM 21671 / CCUG 45161 / LMG 19568 / NCTC 13146 / CH001A</strain>
    </source>
</reference>
<gene>
    <name evidence="1" type="primary">rplS</name>
    <name type="ordered locus">CHAB381_0561</name>
</gene>
<comment type="function">
    <text evidence="1">This protein is located at the 30S-50S ribosomal subunit interface and may play a role in the structure and function of the aminoacyl-tRNA binding site.</text>
</comment>
<comment type="similarity">
    <text evidence="1">Belongs to the bacterial ribosomal protein bL19 family.</text>
</comment>
<name>RL19_CAMHC</name>
<organism>
    <name type="scientific">Campylobacter hominis (strain ATCC BAA-381 / DSM 21671 / CCUG 45161 / LMG 19568 / NCTC 13146 / CH001A)</name>
    <dbReference type="NCBI Taxonomy" id="360107"/>
    <lineage>
        <taxon>Bacteria</taxon>
        <taxon>Pseudomonadati</taxon>
        <taxon>Campylobacterota</taxon>
        <taxon>Epsilonproteobacteria</taxon>
        <taxon>Campylobacterales</taxon>
        <taxon>Campylobacteraceae</taxon>
        <taxon>Campylobacter</taxon>
    </lineage>
</organism>
<sequence>MRNKYIEAFENAQISNKNVPDFRAGDTLKLAIRIKEGEKTRIQNFEGICIARRGSGVGETFIVRKIGANGIGVERIFPIYSESLENIEVLRKGNVRRSKLFYLRDRRGKAAKIKELRK</sequence>
<evidence type="ECO:0000255" key="1">
    <source>
        <dbReference type="HAMAP-Rule" id="MF_00402"/>
    </source>
</evidence>
<evidence type="ECO:0000305" key="2"/>
<proteinExistence type="inferred from homology"/>
<feature type="chain" id="PRO_1000049654" description="Large ribosomal subunit protein bL19">
    <location>
        <begin position="1"/>
        <end position="118"/>
    </location>
</feature>
<accession>A7I0V8</accession>